<accession>Q8PCJ5</accession>
<comment type="function">
    <text evidence="1">Catalyzes the hydrolysis of UDP-3-O-myristoyl-N-acetylglucosamine to form UDP-3-O-myristoylglucosamine and acetate, the committed step in lipid A biosynthesis.</text>
</comment>
<comment type="catalytic activity">
    <reaction evidence="1">
        <text>a UDP-3-O-[(3R)-3-hydroxyacyl]-N-acetyl-alpha-D-glucosamine + H2O = a UDP-3-O-[(3R)-3-hydroxyacyl]-alpha-D-glucosamine + acetate</text>
        <dbReference type="Rhea" id="RHEA:67816"/>
        <dbReference type="ChEBI" id="CHEBI:15377"/>
        <dbReference type="ChEBI" id="CHEBI:30089"/>
        <dbReference type="ChEBI" id="CHEBI:137740"/>
        <dbReference type="ChEBI" id="CHEBI:173225"/>
        <dbReference type="EC" id="3.5.1.108"/>
    </reaction>
</comment>
<comment type="cofactor">
    <cofactor evidence="1">
        <name>Zn(2+)</name>
        <dbReference type="ChEBI" id="CHEBI:29105"/>
    </cofactor>
</comment>
<comment type="pathway">
    <text evidence="1">Glycolipid biosynthesis; lipid IV(A) biosynthesis; lipid IV(A) from (3R)-3-hydroxytetradecanoyl-[acyl-carrier-protein] and UDP-N-acetyl-alpha-D-glucosamine: step 2/6.</text>
</comment>
<comment type="similarity">
    <text evidence="1">Belongs to the LpxC family.</text>
</comment>
<evidence type="ECO:0000255" key="1">
    <source>
        <dbReference type="HAMAP-Rule" id="MF_00388"/>
    </source>
</evidence>
<feature type="chain" id="PRO_0000191967" description="UDP-3-O-acyl-N-acetylglucosamine deacetylase">
    <location>
        <begin position="1"/>
        <end position="303"/>
    </location>
</feature>
<feature type="active site" description="Proton donor" evidence="1">
    <location>
        <position position="264"/>
    </location>
</feature>
<feature type="binding site" evidence="1">
    <location>
        <position position="78"/>
    </location>
    <ligand>
        <name>Zn(2+)</name>
        <dbReference type="ChEBI" id="CHEBI:29105"/>
    </ligand>
</feature>
<feature type="binding site" evidence="1">
    <location>
        <position position="237"/>
    </location>
    <ligand>
        <name>Zn(2+)</name>
        <dbReference type="ChEBI" id="CHEBI:29105"/>
    </ligand>
</feature>
<feature type="binding site" evidence="1">
    <location>
        <position position="241"/>
    </location>
    <ligand>
        <name>Zn(2+)</name>
        <dbReference type="ChEBI" id="CHEBI:29105"/>
    </ligand>
</feature>
<gene>
    <name evidence="1" type="primary">lpxC</name>
    <name type="ordered locus">XCC0731</name>
</gene>
<name>LPXC_XANCP</name>
<keyword id="KW-0378">Hydrolase</keyword>
<keyword id="KW-0441">Lipid A biosynthesis</keyword>
<keyword id="KW-0444">Lipid biosynthesis</keyword>
<keyword id="KW-0443">Lipid metabolism</keyword>
<keyword id="KW-0479">Metal-binding</keyword>
<keyword id="KW-1185">Reference proteome</keyword>
<keyword id="KW-0862">Zinc</keyword>
<reference key="1">
    <citation type="journal article" date="2002" name="Nature">
        <title>Comparison of the genomes of two Xanthomonas pathogens with differing host specificities.</title>
        <authorList>
            <person name="da Silva A.C.R."/>
            <person name="Ferro J.A."/>
            <person name="Reinach F.C."/>
            <person name="Farah C.S."/>
            <person name="Furlan L.R."/>
            <person name="Quaggio R.B."/>
            <person name="Monteiro-Vitorello C.B."/>
            <person name="Van Sluys M.A."/>
            <person name="Almeida N.F. Jr."/>
            <person name="Alves L.M.C."/>
            <person name="do Amaral A.M."/>
            <person name="Bertolini M.C."/>
            <person name="Camargo L.E.A."/>
            <person name="Camarotte G."/>
            <person name="Cannavan F."/>
            <person name="Cardozo J."/>
            <person name="Chambergo F."/>
            <person name="Ciapina L.P."/>
            <person name="Cicarelli R.M.B."/>
            <person name="Coutinho L.L."/>
            <person name="Cursino-Santos J.R."/>
            <person name="El-Dorry H."/>
            <person name="Faria J.B."/>
            <person name="Ferreira A.J.S."/>
            <person name="Ferreira R.C.C."/>
            <person name="Ferro M.I.T."/>
            <person name="Formighieri E.F."/>
            <person name="Franco M.C."/>
            <person name="Greggio C.C."/>
            <person name="Gruber A."/>
            <person name="Katsuyama A.M."/>
            <person name="Kishi L.T."/>
            <person name="Leite R.P."/>
            <person name="Lemos E.G.M."/>
            <person name="Lemos M.V.F."/>
            <person name="Locali E.C."/>
            <person name="Machado M.A."/>
            <person name="Madeira A.M.B.N."/>
            <person name="Martinez-Rossi N.M."/>
            <person name="Martins E.C."/>
            <person name="Meidanis J."/>
            <person name="Menck C.F.M."/>
            <person name="Miyaki C.Y."/>
            <person name="Moon D.H."/>
            <person name="Moreira L.M."/>
            <person name="Novo M.T.M."/>
            <person name="Okura V.K."/>
            <person name="Oliveira M.C."/>
            <person name="Oliveira V.R."/>
            <person name="Pereira H.A."/>
            <person name="Rossi A."/>
            <person name="Sena J.A.D."/>
            <person name="Silva C."/>
            <person name="de Souza R.F."/>
            <person name="Spinola L.A.F."/>
            <person name="Takita M.A."/>
            <person name="Tamura R.E."/>
            <person name="Teixeira E.C."/>
            <person name="Tezza R.I.D."/>
            <person name="Trindade dos Santos M."/>
            <person name="Truffi D."/>
            <person name="Tsai S.M."/>
            <person name="White F.F."/>
            <person name="Setubal J.C."/>
            <person name="Kitajima J.P."/>
        </authorList>
    </citation>
    <scope>NUCLEOTIDE SEQUENCE [LARGE SCALE GENOMIC DNA]</scope>
    <source>
        <strain>ATCC 33913 / DSM 3586 / NCPPB 528 / LMG 568 / P 25</strain>
    </source>
</reference>
<proteinExistence type="inferred from homology"/>
<organism>
    <name type="scientific">Xanthomonas campestris pv. campestris (strain ATCC 33913 / DSM 3586 / NCPPB 528 / LMG 568 / P 25)</name>
    <dbReference type="NCBI Taxonomy" id="190485"/>
    <lineage>
        <taxon>Bacteria</taxon>
        <taxon>Pseudomonadati</taxon>
        <taxon>Pseudomonadota</taxon>
        <taxon>Gammaproteobacteria</taxon>
        <taxon>Lysobacterales</taxon>
        <taxon>Lysobacteraceae</taxon>
        <taxon>Xanthomonas</taxon>
    </lineage>
</organism>
<dbReference type="EC" id="3.5.1.108" evidence="1"/>
<dbReference type="EMBL" id="AE008922">
    <property type="protein sequence ID" value="AAM40046.1"/>
    <property type="molecule type" value="Genomic_DNA"/>
</dbReference>
<dbReference type="RefSeq" id="NP_636122.1">
    <property type="nucleotide sequence ID" value="NC_003902.1"/>
</dbReference>
<dbReference type="RefSeq" id="WP_011035967.1">
    <property type="nucleotide sequence ID" value="NC_003902.1"/>
</dbReference>
<dbReference type="SMR" id="Q8PCJ5"/>
<dbReference type="STRING" id="190485.XCC0731"/>
<dbReference type="EnsemblBacteria" id="AAM40046">
    <property type="protein sequence ID" value="AAM40046"/>
    <property type="gene ID" value="XCC0731"/>
</dbReference>
<dbReference type="KEGG" id="xcc:XCC0731"/>
<dbReference type="PATRIC" id="fig|190485.4.peg.796"/>
<dbReference type="eggNOG" id="COG0774">
    <property type="taxonomic scope" value="Bacteria"/>
</dbReference>
<dbReference type="HOGENOM" id="CLU_046528_1_0_6"/>
<dbReference type="OrthoDB" id="9802746at2"/>
<dbReference type="UniPathway" id="UPA00359">
    <property type="reaction ID" value="UER00478"/>
</dbReference>
<dbReference type="Proteomes" id="UP000001010">
    <property type="component" value="Chromosome"/>
</dbReference>
<dbReference type="GO" id="GO:0016020">
    <property type="term" value="C:membrane"/>
    <property type="evidence" value="ECO:0007669"/>
    <property type="project" value="GOC"/>
</dbReference>
<dbReference type="GO" id="GO:0046872">
    <property type="term" value="F:metal ion binding"/>
    <property type="evidence" value="ECO:0007669"/>
    <property type="project" value="UniProtKB-KW"/>
</dbReference>
<dbReference type="GO" id="GO:0103117">
    <property type="term" value="F:UDP-3-O-acyl-N-acetylglucosamine deacetylase activity"/>
    <property type="evidence" value="ECO:0007669"/>
    <property type="project" value="UniProtKB-UniRule"/>
</dbReference>
<dbReference type="GO" id="GO:0009245">
    <property type="term" value="P:lipid A biosynthetic process"/>
    <property type="evidence" value="ECO:0007669"/>
    <property type="project" value="UniProtKB-UniRule"/>
</dbReference>
<dbReference type="Gene3D" id="3.30.230.20">
    <property type="entry name" value="lpxc deacetylase, domain 1"/>
    <property type="match status" value="1"/>
</dbReference>
<dbReference type="Gene3D" id="3.30.1700.10">
    <property type="entry name" value="lpxc deacetylase, domain 2"/>
    <property type="match status" value="1"/>
</dbReference>
<dbReference type="HAMAP" id="MF_00388">
    <property type="entry name" value="LpxC"/>
    <property type="match status" value="1"/>
</dbReference>
<dbReference type="InterPro" id="IPR020568">
    <property type="entry name" value="Ribosomal_Su5_D2-typ_SF"/>
</dbReference>
<dbReference type="InterPro" id="IPR004463">
    <property type="entry name" value="UDP-acyl_GlcNac_deAcase"/>
</dbReference>
<dbReference type="InterPro" id="IPR011334">
    <property type="entry name" value="UDP-acyl_GlcNac_deAcase_C"/>
</dbReference>
<dbReference type="InterPro" id="IPR015870">
    <property type="entry name" value="UDP-acyl_N-AcGlcN_deAcase_N"/>
</dbReference>
<dbReference type="NCBIfam" id="TIGR00325">
    <property type="entry name" value="lpxC"/>
    <property type="match status" value="1"/>
</dbReference>
<dbReference type="PANTHER" id="PTHR33694">
    <property type="entry name" value="UDP-3-O-ACYL-N-ACETYLGLUCOSAMINE DEACETYLASE 1, MITOCHONDRIAL-RELATED"/>
    <property type="match status" value="1"/>
</dbReference>
<dbReference type="PANTHER" id="PTHR33694:SF1">
    <property type="entry name" value="UDP-3-O-ACYL-N-ACETYLGLUCOSAMINE DEACETYLASE 1, MITOCHONDRIAL-RELATED"/>
    <property type="match status" value="1"/>
</dbReference>
<dbReference type="Pfam" id="PF03331">
    <property type="entry name" value="LpxC"/>
    <property type="match status" value="1"/>
</dbReference>
<dbReference type="SUPFAM" id="SSF54211">
    <property type="entry name" value="Ribosomal protein S5 domain 2-like"/>
    <property type="match status" value="2"/>
</dbReference>
<sequence>MTQQRTLKNTIRATGVGLHSGDKVYMTLRPAPVDHGIVFRRVDLEPVVEVPADAELVTETTLCTGLTCNGAKIQTVEHLMSALAGLGVDNVIVELSSAELPIMDGSSGPFVFLLQSAGIVEQNKAKRFIRIKQPVEVREGDKVARFEPYEGYKLGFTIEFNHPMIPAKQSRQEIEFSTSAYVKEISRARTFGFMRDLEYMRERNLGLGGSMDNAIVLDEFRVLNEDGLRYTNEFVRHKILDAIGDLYLAGGAILGAYEGFKSGHALNNKLVRALLADQAAWEWVSFPEGTEQPPVTYASPVYA</sequence>
<protein>
    <recommendedName>
        <fullName evidence="1">UDP-3-O-acyl-N-acetylglucosamine deacetylase</fullName>
        <shortName evidence="1">UDP-3-O-acyl-GlcNAc deacetylase</shortName>
        <ecNumber evidence="1">3.5.1.108</ecNumber>
    </recommendedName>
    <alternativeName>
        <fullName evidence="1">UDP-3-O-[R-3-hydroxymyristoyl]-N-acetylglucosamine deacetylase</fullName>
    </alternativeName>
</protein>